<accession>Q8NFZ3</accession>
<accession>F5H6W0</accession>
<accession>Q14D08</accession>
<accession>Q7Z3T5</accession>
<accession>Q8N5B6</accession>
<accession>Q9Y2F8</accession>
<sequence length="816" mass="92021">MLRPQGLLWLPLLFTSVCVMLNSNVLLWITALAIKFTLIDSQAQYPVVNTNYGKIQGLRTPLPSEILGPVEQYLGVPYASPPTGERRFQPPESPSSWTGIRNATQFSAVCPQHLDERFLLHDMLPIWFTTSLDTLMTYVQDQNEDCLYLNIYVPMEDDIHEQNSKKPVMVYIHGGSYMEGTGNMIDGSILASYGNVIVITINYRLGILGFLSTGDQAAKGNYGLLDQIQALRWIEENVGAFGGDPKRVTIFGSGAGASCVSLLTLSHYSEGLFQKAIIQSGTALSSWAVNYQPAKYTRILADKVGCNMLDTTDMVECLKNKNYKELIQQTITPATYHIAFGPVIDGDVIPDDPQILMEQGEFLNYDIMLGVNQGEGLKFVDGIVDNEDGVTPNDFDFSVSNFVDNLYGYPEGKDTLRETIKFMYTDWADKENPETRRKTLVALFTDHQWVAPAVATADLHAQYGSPTYFYAFYHHCQSEMKPSWADSAHGDEVPYVFGIPMIGPTELFSCNFSKNDVMLSAVVMTYWTNFAKTGDPNQPVPQDTKFIHTKPNRFEEVAWSKYNPKDQLYLHIGLKPRVRDHYRATKVAFWLELVPHLHNLNEIFQYVSTTTKVPPPDMTSFPYGTRRSPAKIWPTTKRPAITPANNPKHSKDPHKTGPEDTTVLIETKRDYSTELSVTIAVGASLLFLNILAFAALYYKKDKRRHETHRHPSPQRNTTNDITHIQNEEIMSLQMKQLEHDHECESLQAHDTLRLTCPPDYTLTLRRSPDDIPFMTPNTITMIPNTLMGMQPLHTFKTFSGGQNSTNLPHGHSTTRV</sequence>
<feature type="signal peptide" evidence="5">
    <location>
        <begin position="1"/>
        <end position="43"/>
    </location>
</feature>
<feature type="chain" id="PRO_0000008649" description="Neuroligin-4, Y-linked">
    <location>
        <begin position="44"/>
        <end position="816"/>
    </location>
</feature>
<feature type="topological domain" description="Extracellular" evidence="5">
    <location>
        <begin position="44"/>
        <end position="676"/>
    </location>
</feature>
<feature type="transmembrane region" description="Helical" evidence="5">
    <location>
        <begin position="677"/>
        <end position="697"/>
    </location>
</feature>
<feature type="topological domain" description="Cytoplasmic" evidence="5">
    <location>
        <begin position="698"/>
        <end position="816"/>
    </location>
</feature>
<feature type="region of interest" description="Interaction with NRXN1" evidence="1">
    <location>
        <begin position="359"/>
        <end position="364"/>
    </location>
</feature>
<feature type="region of interest" description="Disordered" evidence="6">
    <location>
        <begin position="636"/>
        <end position="659"/>
    </location>
</feature>
<feature type="compositionally biased region" description="Basic and acidic residues" evidence="6">
    <location>
        <begin position="649"/>
        <end position="658"/>
    </location>
</feature>
<feature type="modified residue" description="Phosphoserine" evidence="3">
    <location>
        <position position="712"/>
    </location>
</feature>
<feature type="glycosylation site" description="N-linked (GlcNAc...) asparagine" evidence="5">
    <location>
        <position position="102"/>
    </location>
</feature>
<feature type="glycosylation site" description="N-linked (GlcNAc...) asparagine" evidence="5">
    <location>
        <position position="511"/>
    </location>
</feature>
<feature type="disulfide bond" evidence="1">
    <location>
        <begin position="110"/>
        <end position="146"/>
    </location>
</feature>
<feature type="disulfide bond" evidence="1">
    <location>
        <begin position="306"/>
        <end position="317"/>
    </location>
</feature>
<feature type="disulfide bond" evidence="1">
    <location>
        <begin position="476"/>
        <end position="510"/>
    </location>
</feature>
<feature type="splice variant" id="VSP_007537" description="In isoform 2." evidence="8">
    <location>
        <begin position="1"/>
        <end position="168"/>
    </location>
</feature>
<feature type="splice variant" id="VSP_044852" description="In isoform 3." evidence="9">
    <location>
        <begin position="1"/>
        <end position="122"/>
    </location>
</feature>
<feature type="splice variant" id="VSP_044853" description="In isoform 3 and isoform 4." evidence="9 10">
    <original>D</original>
    <variation>DGTNIKRNADDITSNDHGEDK</variation>
    <location>
        <position position="157"/>
    </location>
</feature>
<feature type="splice variant" id="VSP_044854" description="In isoform 3 and isoform 4." evidence="9 10">
    <original>FLSTGDQAAKGNYGLLDQIQALRWIEE</original>
    <variation>MQEARLCGSSKMFNYFKSPFTNLINFF</variation>
    <location>
        <begin position="210"/>
        <end position="236"/>
    </location>
</feature>
<feature type="splice variant" id="VSP_044855" description="In isoform 3 and isoform 4." evidence="9 10">
    <location>
        <begin position="237"/>
        <end position="816"/>
    </location>
</feature>
<feature type="sequence conflict" description="In Ref. 3; CAD97670." evidence="10" ref="3">
    <original>Y</original>
    <variation>C</variation>
    <location>
        <position position="203"/>
    </location>
</feature>
<evidence type="ECO:0000250" key="1"/>
<evidence type="ECO:0000250" key="2">
    <source>
        <dbReference type="UniProtKB" id="B0F2B4"/>
    </source>
</evidence>
<evidence type="ECO:0000250" key="3">
    <source>
        <dbReference type="UniProtKB" id="Q62889"/>
    </source>
</evidence>
<evidence type="ECO:0000250" key="4">
    <source>
        <dbReference type="UniProtKB" id="Q8N0W4"/>
    </source>
</evidence>
<evidence type="ECO:0000255" key="5"/>
<evidence type="ECO:0000256" key="6">
    <source>
        <dbReference type="SAM" id="MobiDB-lite"/>
    </source>
</evidence>
<evidence type="ECO:0000269" key="7">
    <source>
    </source>
</evidence>
<evidence type="ECO:0000303" key="8">
    <source>
    </source>
</evidence>
<evidence type="ECO:0000303" key="9">
    <source>
    </source>
</evidence>
<evidence type="ECO:0000305" key="10"/>
<organism>
    <name type="scientific">Homo sapiens</name>
    <name type="common">Human</name>
    <dbReference type="NCBI Taxonomy" id="9606"/>
    <lineage>
        <taxon>Eukaryota</taxon>
        <taxon>Metazoa</taxon>
        <taxon>Chordata</taxon>
        <taxon>Craniata</taxon>
        <taxon>Vertebrata</taxon>
        <taxon>Euteleostomi</taxon>
        <taxon>Mammalia</taxon>
        <taxon>Eutheria</taxon>
        <taxon>Euarchontoglires</taxon>
        <taxon>Primates</taxon>
        <taxon>Haplorrhini</taxon>
        <taxon>Catarrhini</taxon>
        <taxon>Hominidae</taxon>
        <taxon>Homo</taxon>
    </lineage>
</organism>
<reference key="1">
    <citation type="journal article" date="2003" name="Nat. Genet.">
        <title>Mutations of the X-linked genes encoding neuroligins NLGN3 and NLGN4 are associated with autism.</title>
        <authorList>
            <person name="Jamain S."/>
            <person name="Quach H."/>
            <person name="Betancur C."/>
            <person name="Rastam M."/>
            <person name="Colineaux C."/>
            <person name="Gillberg I.C."/>
            <person name="Soderstrom H."/>
            <person name="Giros B."/>
            <person name="Leboyer M."/>
            <person name="Gillberg C."/>
            <person name="Bourgeron T."/>
            <person name="Nyden A."/>
            <person name="Philippe A."/>
            <person name="Cohen D."/>
            <person name="Chabane N."/>
            <person name="Mouren-Simeoni M.C."/>
            <person name="Brice A."/>
            <person name="Sponheim E."/>
            <person name="Spurkland I."/>
            <person name="Skjeldal O.H."/>
            <person name="Coleman M."/>
            <person name="Pearl P.L."/>
            <person name="Cohen I.L."/>
            <person name="Tsiouris J."/>
            <person name="Zappella M."/>
            <person name="Menchetti G."/>
            <person name="Pompella A."/>
            <person name="Aschauer H."/>
            <person name="Van Maldergem L."/>
        </authorList>
    </citation>
    <scope>NUCLEOTIDE SEQUENCE [MRNA] (ISOFORM 1)</scope>
</reference>
<reference key="2">
    <citation type="journal article" date="1999" name="DNA Res.">
        <title>Prediction of the coding sequences of unidentified human genes. XIII. The complete sequences of 100 new cDNA clones from brain which code for large proteins in vitro.</title>
        <authorList>
            <person name="Nagase T."/>
            <person name="Ishikawa K."/>
            <person name="Suyama M."/>
            <person name="Kikuno R."/>
            <person name="Hirosawa M."/>
            <person name="Miyajima N."/>
            <person name="Tanaka A."/>
            <person name="Kotani H."/>
            <person name="Nomura N."/>
            <person name="Ohara O."/>
        </authorList>
    </citation>
    <scope>NUCLEOTIDE SEQUENCE [LARGE SCALE MRNA] (ISOFORM 2)</scope>
    <source>
        <tissue>Brain</tissue>
    </source>
</reference>
<reference key="3">
    <citation type="journal article" date="2007" name="BMC Genomics">
        <title>The full-ORF clone resource of the German cDNA consortium.</title>
        <authorList>
            <person name="Bechtel S."/>
            <person name="Rosenfelder H."/>
            <person name="Duda A."/>
            <person name="Schmidt C.P."/>
            <person name="Ernst U."/>
            <person name="Wellenreuther R."/>
            <person name="Mehrle A."/>
            <person name="Schuster C."/>
            <person name="Bahr A."/>
            <person name="Bloecker H."/>
            <person name="Heubner D."/>
            <person name="Hoerlein A."/>
            <person name="Michel G."/>
            <person name="Wedler H."/>
            <person name="Koehrer K."/>
            <person name="Ottenwaelder B."/>
            <person name="Poustka A."/>
            <person name="Wiemann S."/>
            <person name="Schupp I."/>
        </authorList>
    </citation>
    <scope>NUCLEOTIDE SEQUENCE [LARGE SCALE MRNA] (ISOFORM 1)</scope>
    <source>
        <tissue>Fetal kidney</tissue>
    </source>
</reference>
<reference key="4">
    <citation type="journal article" date="2003" name="Nature">
        <title>The male-specific region of the human Y chromosome is a mosaic of discrete sequence classes.</title>
        <authorList>
            <person name="Skaletsky H."/>
            <person name="Kuroda-Kawaguchi T."/>
            <person name="Minx P.J."/>
            <person name="Cordum H.S."/>
            <person name="Hillier L.W."/>
            <person name="Brown L.G."/>
            <person name="Repping S."/>
            <person name="Pyntikova T."/>
            <person name="Ali J."/>
            <person name="Bieri T."/>
            <person name="Chinwalla A."/>
            <person name="Delehaunty A."/>
            <person name="Delehaunty K."/>
            <person name="Du H."/>
            <person name="Fewell G."/>
            <person name="Fulton L."/>
            <person name="Fulton R."/>
            <person name="Graves T.A."/>
            <person name="Hou S.-F."/>
            <person name="Latrielle P."/>
            <person name="Leonard S."/>
            <person name="Mardis E."/>
            <person name="Maupin R."/>
            <person name="McPherson J."/>
            <person name="Miner T."/>
            <person name="Nash W."/>
            <person name="Nguyen C."/>
            <person name="Ozersky P."/>
            <person name="Pepin K."/>
            <person name="Rock S."/>
            <person name="Rohlfing T."/>
            <person name="Scott K."/>
            <person name="Schultz B."/>
            <person name="Strong C."/>
            <person name="Tin-Wollam A."/>
            <person name="Yang S.-P."/>
            <person name="Waterston R.H."/>
            <person name="Wilson R.K."/>
            <person name="Rozen S."/>
            <person name="Page D.C."/>
        </authorList>
    </citation>
    <scope>NUCLEOTIDE SEQUENCE [LARGE SCALE GENOMIC DNA]</scope>
    <scope>TISSUE SPECIFICITY</scope>
</reference>
<reference key="5">
    <citation type="journal article" date="2004" name="Genome Res.">
        <title>The status, quality, and expansion of the NIH full-length cDNA project: the Mammalian Gene Collection (MGC).</title>
        <authorList>
            <consortium name="The MGC Project Team"/>
        </authorList>
    </citation>
    <scope>NUCLEOTIDE SEQUENCE [LARGE SCALE MRNA] (ISOFORMS 1 AND 3)</scope>
    <source>
        <tissue>Brain</tissue>
        <tissue>Pancreas</tissue>
    </source>
</reference>
<dbReference type="EMBL" id="AF376804">
    <property type="protein sequence ID" value="AAM46113.1"/>
    <property type="molecule type" value="mRNA"/>
</dbReference>
<dbReference type="EMBL" id="AB023168">
    <property type="protein sequence ID" value="BAA76795.2"/>
    <property type="status" value="ALT_INIT"/>
    <property type="molecule type" value="mRNA"/>
</dbReference>
<dbReference type="EMBL" id="BX537428">
    <property type="protein sequence ID" value="CAD97670.1"/>
    <property type="molecule type" value="mRNA"/>
</dbReference>
<dbReference type="EMBL" id="AC010726">
    <property type="status" value="NOT_ANNOTATED_CDS"/>
    <property type="molecule type" value="Genomic_DNA"/>
</dbReference>
<dbReference type="EMBL" id="AC010879">
    <property type="status" value="NOT_ANNOTATED_CDS"/>
    <property type="molecule type" value="Genomic_DNA"/>
</dbReference>
<dbReference type="EMBL" id="AC010979">
    <property type="status" value="NOT_ANNOTATED_CDS"/>
    <property type="molecule type" value="Genomic_DNA"/>
</dbReference>
<dbReference type="EMBL" id="AC011903">
    <property type="status" value="NOT_ANNOTATED_CDS"/>
    <property type="molecule type" value="Genomic_DNA"/>
</dbReference>
<dbReference type="EMBL" id="BC032567">
    <property type="protein sequence ID" value="AAH32567.1"/>
    <property type="molecule type" value="mRNA"/>
</dbReference>
<dbReference type="EMBL" id="BC113525">
    <property type="protein sequence ID" value="AAI13526.1"/>
    <property type="molecule type" value="mRNA"/>
</dbReference>
<dbReference type="EMBL" id="BC113551">
    <property type="protein sequence ID" value="AAI13552.1"/>
    <property type="molecule type" value="mRNA"/>
</dbReference>
<dbReference type="CCDS" id="CCDS14788.1">
    <molecule id="Q8NFZ3-1"/>
</dbReference>
<dbReference type="CCDS" id="CCDS56619.1">
    <molecule id="Q8NFZ3-2"/>
</dbReference>
<dbReference type="RefSeq" id="NP_001157710.1">
    <molecule id="Q8NFZ3-4"/>
    <property type="nucleotide sequence ID" value="NM_001164238.1"/>
</dbReference>
<dbReference type="RefSeq" id="NP_001193779.1">
    <molecule id="Q8NFZ3-2"/>
    <property type="nucleotide sequence ID" value="NM_001206850.2"/>
</dbReference>
<dbReference type="RefSeq" id="NP_001352519.1">
    <molecule id="Q8NFZ3-1"/>
    <property type="nucleotide sequence ID" value="NM_001365590.1"/>
</dbReference>
<dbReference type="RefSeq" id="NP_001352520.1">
    <molecule id="Q8NFZ3-1"/>
    <property type="nucleotide sequence ID" value="NM_001365591.1"/>
</dbReference>
<dbReference type="RefSeq" id="NP_001352521.1">
    <molecule id="Q8NFZ3-1"/>
    <property type="nucleotide sequence ID" value="NM_001365592.1"/>
</dbReference>
<dbReference type="RefSeq" id="NP_001352522.1">
    <molecule id="Q8NFZ3-1"/>
    <property type="nucleotide sequence ID" value="NM_001365593.1"/>
</dbReference>
<dbReference type="RefSeq" id="NP_001381760.1">
    <molecule id="Q8NFZ3-1"/>
    <property type="nucleotide sequence ID" value="NM_001394831.1"/>
</dbReference>
<dbReference type="RefSeq" id="NP_055708.3">
    <molecule id="Q8NFZ3-1"/>
    <property type="nucleotide sequence ID" value="NM_014893.4"/>
</dbReference>
<dbReference type="RefSeq" id="XP_016885523.1">
    <property type="nucleotide sequence ID" value="XM_017030034.1"/>
</dbReference>
<dbReference type="RefSeq" id="XP_016885524.1">
    <property type="nucleotide sequence ID" value="XM_017030035.1"/>
</dbReference>
<dbReference type="RefSeq" id="XP_016885525.1">
    <molecule id="Q8NFZ3-1"/>
    <property type="nucleotide sequence ID" value="XM_017030036.2"/>
</dbReference>
<dbReference type="RefSeq" id="XP_016885526.1">
    <property type="nucleotide sequence ID" value="XM_017030037.1"/>
</dbReference>
<dbReference type="RefSeq" id="XP_016885527.1">
    <property type="nucleotide sequence ID" value="XM_017030038.1"/>
</dbReference>
<dbReference type="RefSeq" id="XP_016885529.1">
    <molecule id="Q8NFZ3-2"/>
    <property type="nucleotide sequence ID" value="XM_017030040.2"/>
</dbReference>
<dbReference type="RefSeq" id="XP_016885530.1">
    <molecule id="Q8NFZ3-4"/>
    <property type="nucleotide sequence ID" value="XM_017030041.2"/>
</dbReference>
<dbReference type="RefSeq" id="XP_047298675.1">
    <molecule id="Q8NFZ3-1"/>
    <property type="nucleotide sequence ID" value="XM_047442719.1"/>
</dbReference>
<dbReference type="RefSeq" id="XP_047298676.1">
    <molecule id="Q8NFZ3-1"/>
    <property type="nucleotide sequence ID" value="XM_047442720.1"/>
</dbReference>
<dbReference type="RefSeq" id="XP_047298677.1">
    <molecule id="Q8NFZ3-4"/>
    <property type="nucleotide sequence ID" value="XM_047442721.1"/>
</dbReference>
<dbReference type="RefSeq" id="XP_047298678.1">
    <molecule id="Q8NFZ3-4"/>
    <property type="nucleotide sequence ID" value="XM_047442722.1"/>
</dbReference>
<dbReference type="RefSeq" id="XP_054184237.1">
    <molecule id="Q8NFZ3-1"/>
    <property type="nucleotide sequence ID" value="XM_054328262.1"/>
</dbReference>
<dbReference type="RefSeq" id="XP_054184238.1">
    <molecule id="Q8NFZ3-1"/>
    <property type="nucleotide sequence ID" value="XM_054328263.1"/>
</dbReference>
<dbReference type="RefSeq" id="XP_054184239.1">
    <molecule id="Q8NFZ3-1"/>
    <property type="nucleotide sequence ID" value="XM_054328264.1"/>
</dbReference>
<dbReference type="RefSeq" id="XP_054184241.1">
    <molecule id="Q8NFZ3-2"/>
    <property type="nucleotide sequence ID" value="XM_054328266.1"/>
</dbReference>
<dbReference type="RefSeq" id="XP_054184242.1">
    <molecule id="Q8NFZ3-4"/>
    <property type="nucleotide sequence ID" value="XM_054328267.1"/>
</dbReference>
<dbReference type="RefSeq" id="XP_054184243.1">
    <molecule id="Q8NFZ3-4"/>
    <property type="nucleotide sequence ID" value="XM_054328268.1"/>
</dbReference>
<dbReference type="RefSeq" id="XP_054184244.1">
    <molecule id="Q8NFZ3-4"/>
    <property type="nucleotide sequence ID" value="XM_054328269.1"/>
</dbReference>
<dbReference type="SMR" id="Q8NFZ3"/>
<dbReference type="BioGRID" id="116504">
    <property type="interactions" value="5"/>
</dbReference>
<dbReference type="FunCoup" id="Q8NFZ3">
    <property type="interactions" value="209"/>
</dbReference>
<dbReference type="IntAct" id="Q8NFZ3">
    <property type="interactions" value="5"/>
</dbReference>
<dbReference type="STRING" id="9606.ENSP00000348169"/>
<dbReference type="ESTHER" id="human-NLGN4Y">
    <property type="family name" value="Neuroligin"/>
</dbReference>
<dbReference type="MEROPS" id="S09.989"/>
<dbReference type="GlyCosmos" id="Q8NFZ3">
    <property type="glycosylation" value="2 sites, No reported glycans"/>
</dbReference>
<dbReference type="GlyGen" id="Q8NFZ3">
    <property type="glycosylation" value="4 sites, 1 N-linked glycan (1 site)"/>
</dbReference>
<dbReference type="iPTMnet" id="Q8NFZ3"/>
<dbReference type="PhosphoSitePlus" id="Q8NFZ3"/>
<dbReference type="SwissPalm" id="Q8NFZ3"/>
<dbReference type="BioMuta" id="NLGN4Y"/>
<dbReference type="DMDM" id="31076823"/>
<dbReference type="jPOST" id="Q8NFZ3"/>
<dbReference type="MassIVE" id="Q8NFZ3"/>
<dbReference type="PeptideAtlas" id="Q8NFZ3"/>
<dbReference type="ProteomicsDB" id="73395">
    <molecule id="Q8NFZ3-1"/>
</dbReference>
<dbReference type="ProteomicsDB" id="73396">
    <molecule id="Q8NFZ3-2"/>
</dbReference>
<dbReference type="Pumba" id="Q8NFZ3"/>
<dbReference type="Antibodypedia" id="21872">
    <property type="antibodies" value="143 antibodies from 27 providers"/>
</dbReference>
<dbReference type="DNASU" id="22829"/>
<dbReference type="Ensembl" id="ENST00000339174.9">
    <molecule id="Q8NFZ3-1"/>
    <property type="protein sequence ID" value="ENSP00000342535.5"/>
    <property type="gene ID" value="ENSG00000165246.15"/>
</dbReference>
<dbReference type="Ensembl" id="ENST00000355905.6">
    <molecule id="Q8NFZ3-1"/>
    <property type="protein sequence ID" value="ENSP00000348169.2"/>
    <property type="gene ID" value="ENSG00000165246.15"/>
</dbReference>
<dbReference type="Ensembl" id="ENST00000382872.5">
    <molecule id="Q8NFZ3-2"/>
    <property type="protein sequence ID" value="ENSP00000372325.1"/>
    <property type="gene ID" value="ENSG00000165246.15"/>
</dbReference>
<dbReference type="GeneID" id="22829"/>
<dbReference type="KEGG" id="hsa:22829"/>
<dbReference type="UCSC" id="uc004fte.3">
    <molecule id="Q8NFZ3-1"/>
    <property type="organism name" value="human"/>
</dbReference>
<dbReference type="AGR" id="HGNC:15529"/>
<dbReference type="CTD" id="22829"/>
<dbReference type="DisGeNET" id="22829"/>
<dbReference type="GeneCards" id="NLGN4Y"/>
<dbReference type="HGNC" id="HGNC:15529">
    <property type="gene designation" value="NLGN4Y"/>
</dbReference>
<dbReference type="HPA" id="ENSG00000165246">
    <property type="expression patterns" value="Tissue enhanced (seminal)"/>
</dbReference>
<dbReference type="MalaCards" id="NLGN4Y"/>
<dbReference type="MIM" id="400028">
    <property type="type" value="gene"/>
</dbReference>
<dbReference type="neXtProt" id="NX_Q8NFZ3"/>
<dbReference type="OpenTargets" id="ENSG00000165246"/>
<dbReference type="PharmGKB" id="PA38386"/>
<dbReference type="VEuPathDB" id="HostDB:ENSG00000165246"/>
<dbReference type="GeneTree" id="ENSGT00940000156607"/>
<dbReference type="HOGENOM" id="CLU_006586_5_1_1"/>
<dbReference type="InParanoid" id="Q8NFZ3"/>
<dbReference type="OrthoDB" id="408631at2759"/>
<dbReference type="PAN-GO" id="Q8NFZ3">
    <property type="GO annotations" value="11 GO annotations based on evolutionary models"/>
</dbReference>
<dbReference type="PhylomeDB" id="Q8NFZ3"/>
<dbReference type="TreeFam" id="TF326187"/>
<dbReference type="PathwayCommons" id="Q8NFZ3"/>
<dbReference type="Reactome" id="R-HSA-6794361">
    <property type="pathway name" value="Neurexins and neuroligins"/>
</dbReference>
<dbReference type="SIGNOR" id="Q8NFZ3"/>
<dbReference type="BioGRID-ORCS" id="22829">
    <property type="hits" value="8 hits in 686 CRISPR screens"/>
</dbReference>
<dbReference type="ChiTaRS" id="NLGN4Y">
    <property type="organism name" value="human"/>
</dbReference>
<dbReference type="GenomeRNAi" id="22829"/>
<dbReference type="Pharos" id="Q8NFZ3">
    <property type="development level" value="Tbio"/>
</dbReference>
<dbReference type="PRO" id="PR:Q8NFZ3"/>
<dbReference type="Proteomes" id="UP000005640">
    <property type="component" value="Chromosome Y"/>
</dbReference>
<dbReference type="RNAct" id="Q8NFZ3">
    <property type="molecule type" value="protein"/>
</dbReference>
<dbReference type="Bgee" id="ENSG00000165246">
    <property type="expression patterns" value="Expressed in primordial germ cell in gonad and 121 other cell types or tissues"/>
</dbReference>
<dbReference type="ExpressionAtlas" id="Q8NFZ3">
    <property type="expression patterns" value="baseline and differential"/>
</dbReference>
<dbReference type="GO" id="GO:0098985">
    <property type="term" value="C:asymmetric, glutamatergic, excitatory synapse"/>
    <property type="evidence" value="ECO:0000304"/>
    <property type="project" value="ARUK-UCL"/>
</dbReference>
<dbReference type="GO" id="GO:0016020">
    <property type="term" value="C:membrane"/>
    <property type="evidence" value="ECO:0000304"/>
    <property type="project" value="ARUK-UCL"/>
</dbReference>
<dbReference type="GO" id="GO:0005886">
    <property type="term" value="C:plasma membrane"/>
    <property type="evidence" value="ECO:0000304"/>
    <property type="project" value="Reactome"/>
</dbReference>
<dbReference type="GO" id="GO:0098839">
    <property type="term" value="C:postsynaptic density membrane"/>
    <property type="evidence" value="ECO:0007669"/>
    <property type="project" value="UniProtKB-SubCell"/>
</dbReference>
<dbReference type="GO" id="GO:0099634">
    <property type="term" value="C:postsynaptic specialization membrane"/>
    <property type="evidence" value="ECO:0000318"/>
    <property type="project" value="GO_Central"/>
</dbReference>
<dbReference type="GO" id="GO:0098983">
    <property type="term" value="C:symmetric, GABA-ergic, inhibitory synapse"/>
    <property type="evidence" value="ECO:0000304"/>
    <property type="project" value="ARUK-UCL"/>
</dbReference>
<dbReference type="GO" id="GO:0050839">
    <property type="term" value="F:cell adhesion molecule binding"/>
    <property type="evidence" value="ECO:0000304"/>
    <property type="project" value="BHF-UCL"/>
</dbReference>
<dbReference type="GO" id="GO:0042043">
    <property type="term" value="F:neurexin family protein binding"/>
    <property type="evidence" value="ECO:0007669"/>
    <property type="project" value="InterPro"/>
</dbReference>
<dbReference type="GO" id="GO:0097110">
    <property type="term" value="F:scaffold protein binding"/>
    <property type="evidence" value="ECO:0000353"/>
    <property type="project" value="BHF-UCL"/>
</dbReference>
<dbReference type="GO" id="GO:0007612">
    <property type="term" value="P:learning"/>
    <property type="evidence" value="ECO:0000315"/>
    <property type="project" value="BHF-UCL"/>
</dbReference>
<dbReference type="GO" id="GO:0007158">
    <property type="term" value="P:neuron cell-cell adhesion"/>
    <property type="evidence" value="ECO:0000304"/>
    <property type="project" value="BHF-UCL"/>
</dbReference>
<dbReference type="GO" id="GO:0099054">
    <property type="term" value="P:presynapse assembly"/>
    <property type="evidence" value="ECO:0000304"/>
    <property type="project" value="ARUK-UCL"/>
</dbReference>
<dbReference type="GO" id="GO:0035176">
    <property type="term" value="P:social behavior"/>
    <property type="evidence" value="ECO:0000315"/>
    <property type="project" value="BHF-UCL"/>
</dbReference>
<dbReference type="GO" id="GO:0071625">
    <property type="term" value="P:vocalization behavior"/>
    <property type="evidence" value="ECO:0000315"/>
    <property type="project" value="BHF-UCL"/>
</dbReference>
<dbReference type="FunFam" id="3.40.50.1820:FF:000001">
    <property type="entry name" value="Neuroligin 3 isoform"/>
    <property type="match status" value="1"/>
</dbReference>
<dbReference type="Gene3D" id="3.40.50.1820">
    <property type="entry name" value="alpha/beta hydrolase"/>
    <property type="match status" value="1"/>
</dbReference>
<dbReference type="InterPro" id="IPR029058">
    <property type="entry name" value="AB_hydrolase_fold"/>
</dbReference>
<dbReference type="InterPro" id="IPR002018">
    <property type="entry name" value="CarbesteraseB"/>
</dbReference>
<dbReference type="InterPro" id="IPR019819">
    <property type="entry name" value="Carboxylesterase_B_CS"/>
</dbReference>
<dbReference type="InterPro" id="IPR051093">
    <property type="entry name" value="Neuroligin/BSAL"/>
</dbReference>
<dbReference type="InterPro" id="IPR000460">
    <property type="entry name" value="Nlgn"/>
</dbReference>
<dbReference type="PANTHER" id="PTHR43903">
    <property type="entry name" value="NEUROLIGIN"/>
    <property type="match status" value="1"/>
</dbReference>
<dbReference type="Pfam" id="PF00135">
    <property type="entry name" value="COesterase"/>
    <property type="match status" value="1"/>
</dbReference>
<dbReference type="PRINTS" id="PR01090">
    <property type="entry name" value="NEUROLIGIN"/>
</dbReference>
<dbReference type="SUPFAM" id="SSF53474">
    <property type="entry name" value="alpha/beta-Hydrolases"/>
    <property type="match status" value="1"/>
</dbReference>
<dbReference type="PROSITE" id="PS00941">
    <property type="entry name" value="CARBOXYLESTERASE_B_2"/>
    <property type="match status" value="1"/>
</dbReference>
<proteinExistence type="evidence at protein level"/>
<name>NLGNY_HUMAN</name>
<comment type="function">
    <text evidence="4">Cell surface protein involved in cell-cell-interactions via its interactions with neurexin family members.</text>
</comment>
<comment type="subunit">
    <text evidence="2 4">Homodimer. Interacts with NRXN1 in a calcium-dependent manner. Interaction with neurexins is mediated by heparan sulfate glycan modification on neurexin. Interacts through its C-terminus with DLG4/PSD-95 third PDZ domain.</text>
</comment>
<comment type="subcellular location">
    <subcellularLocation>
        <location>Cell membrane</location>
        <topology>Single-pass type I membrane protein</topology>
    </subcellularLocation>
    <subcellularLocation>
        <location evidence="1">Postsynaptic density membrane</location>
    </subcellularLocation>
</comment>
<comment type="alternative products">
    <event type="alternative splicing"/>
    <isoform>
        <id>Q8NFZ3-1</id>
        <name>1</name>
        <sequence type="displayed"/>
    </isoform>
    <isoform>
        <id>Q8NFZ3-2</id>
        <name>2</name>
        <sequence type="described" ref="VSP_007537"/>
    </isoform>
    <isoform>
        <id>Q8NFZ3-3</id>
        <name>3</name>
        <sequence type="described" ref="VSP_044852 VSP_044853 VSP_044854 VSP_044855"/>
    </isoform>
    <isoform>
        <id>Q8NFZ3-4</id>
        <name>4</name>
        <sequence type="described" ref="VSP_044853 VSP_044854 VSP_044855"/>
    </isoform>
</comment>
<comment type="tissue specificity">
    <text evidence="7">Expressed in fetal and adult brain, prostate and testis.</text>
</comment>
<comment type="similarity">
    <text evidence="10">Belongs to the type-B carboxylesterase/lipase family.</text>
</comment>
<comment type="sequence caution" evidence="10">
    <conflict type="erroneous initiation">
        <sequence resource="EMBL-CDS" id="BAA76795"/>
    </conflict>
</comment>
<keyword id="KW-0025">Alternative splicing</keyword>
<keyword id="KW-0130">Cell adhesion</keyword>
<keyword id="KW-1003">Cell membrane</keyword>
<keyword id="KW-1015">Disulfide bond</keyword>
<keyword id="KW-0325">Glycoprotein</keyword>
<keyword id="KW-0472">Membrane</keyword>
<keyword id="KW-0597">Phosphoprotein</keyword>
<keyword id="KW-0628">Postsynaptic cell membrane</keyword>
<keyword id="KW-1267">Proteomics identification</keyword>
<keyword id="KW-1185">Reference proteome</keyword>
<keyword id="KW-0732">Signal</keyword>
<keyword id="KW-0770">Synapse</keyword>
<keyword id="KW-0812">Transmembrane</keyword>
<keyword id="KW-1133">Transmembrane helix</keyword>
<protein>
    <recommendedName>
        <fullName>Neuroligin-4, Y-linked</fullName>
        <shortName>Neuroligin Y</shortName>
    </recommendedName>
</protein>
<gene>
    <name type="primary">NLGN4Y</name>
    <name type="synonym">KIAA0951</name>
</gene>